<feature type="chain" id="PRO_1000093945" description="4-hydroxy-tetrahydrodipicolinate reductase">
    <location>
        <begin position="1"/>
        <end position="271"/>
    </location>
</feature>
<feature type="region of interest" description="Disordered" evidence="2">
    <location>
        <begin position="183"/>
        <end position="202"/>
    </location>
</feature>
<feature type="compositionally biased region" description="Basic and acidic residues" evidence="2">
    <location>
        <begin position="185"/>
        <end position="202"/>
    </location>
</feature>
<feature type="active site" description="Proton donor/acceptor" evidence="1">
    <location>
        <position position="157"/>
    </location>
</feature>
<feature type="active site" description="Proton donor" evidence="1">
    <location>
        <position position="161"/>
    </location>
</feature>
<feature type="binding site" evidence="1">
    <location>
        <begin position="10"/>
        <end position="15"/>
    </location>
    <ligand>
        <name>NAD(+)</name>
        <dbReference type="ChEBI" id="CHEBI:57540"/>
    </ligand>
</feature>
<feature type="binding site" evidence="1">
    <location>
        <position position="37"/>
    </location>
    <ligand>
        <name>NADP(+)</name>
        <dbReference type="ChEBI" id="CHEBI:58349"/>
    </ligand>
</feature>
<feature type="binding site" evidence="1">
    <location>
        <begin position="100"/>
        <end position="102"/>
    </location>
    <ligand>
        <name>NAD(+)</name>
        <dbReference type="ChEBI" id="CHEBI:57540"/>
    </ligand>
</feature>
<feature type="binding site" evidence="1">
    <location>
        <begin position="124"/>
        <end position="127"/>
    </location>
    <ligand>
        <name>NAD(+)</name>
        <dbReference type="ChEBI" id="CHEBI:57540"/>
    </ligand>
</feature>
<feature type="binding site" evidence="1">
    <location>
        <position position="158"/>
    </location>
    <ligand>
        <name>(S)-2,3,4,5-tetrahydrodipicolinate</name>
        <dbReference type="ChEBI" id="CHEBI:16845"/>
    </ligand>
</feature>
<feature type="binding site" evidence="1">
    <location>
        <begin position="167"/>
        <end position="168"/>
    </location>
    <ligand>
        <name>(S)-2,3,4,5-tetrahydrodipicolinate</name>
        <dbReference type="ChEBI" id="CHEBI:16845"/>
    </ligand>
</feature>
<proteinExistence type="inferred from homology"/>
<organism>
    <name type="scientific">Beijerinckia indica subsp. indica (strain ATCC 9039 / DSM 1715 / NCIMB 8712)</name>
    <dbReference type="NCBI Taxonomy" id="395963"/>
    <lineage>
        <taxon>Bacteria</taxon>
        <taxon>Pseudomonadati</taxon>
        <taxon>Pseudomonadota</taxon>
        <taxon>Alphaproteobacteria</taxon>
        <taxon>Hyphomicrobiales</taxon>
        <taxon>Beijerinckiaceae</taxon>
        <taxon>Beijerinckia</taxon>
    </lineage>
</organism>
<evidence type="ECO:0000255" key="1">
    <source>
        <dbReference type="HAMAP-Rule" id="MF_00102"/>
    </source>
</evidence>
<evidence type="ECO:0000256" key="2">
    <source>
        <dbReference type="SAM" id="MobiDB-lite"/>
    </source>
</evidence>
<evidence type="ECO:0000305" key="3"/>
<dbReference type="EC" id="1.17.1.8" evidence="1"/>
<dbReference type="EMBL" id="CP001016">
    <property type="protein sequence ID" value="ACB93790.1"/>
    <property type="molecule type" value="Genomic_DNA"/>
</dbReference>
<dbReference type="RefSeq" id="WP_012383148.1">
    <property type="nucleotide sequence ID" value="NC_010581.1"/>
</dbReference>
<dbReference type="SMR" id="B2IBR8"/>
<dbReference type="STRING" id="395963.Bind_0132"/>
<dbReference type="KEGG" id="bid:Bind_0132"/>
<dbReference type="eggNOG" id="COG0289">
    <property type="taxonomic scope" value="Bacteria"/>
</dbReference>
<dbReference type="HOGENOM" id="CLU_047479_2_1_5"/>
<dbReference type="UniPathway" id="UPA00034">
    <property type="reaction ID" value="UER00018"/>
</dbReference>
<dbReference type="Proteomes" id="UP000001695">
    <property type="component" value="Chromosome"/>
</dbReference>
<dbReference type="GO" id="GO:0005829">
    <property type="term" value="C:cytosol"/>
    <property type="evidence" value="ECO:0007669"/>
    <property type="project" value="TreeGrafter"/>
</dbReference>
<dbReference type="GO" id="GO:0008839">
    <property type="term" value="F:4-hydroxy-tetrahydrodipicolinate reductase"/>
    <property type="evidence" value="ECO:0007669"/>
    <property type="project" value="UniProtKB-EC"/>
</dbReference>
<dbReference type="GO" id="GO:0051287">
    <property type="term" value="F:NAD binding"/>
    <property type="evidence" value="ECO:0007669"/>
    <property type="project" value="UniProtKB-UniRule"/>
</dbReference>
<dbReference type="GO" id="GO:0050661">
    <property type="term" value="F:NADP binding"/>
    <property type="evidence" value="ECO:0007669"/>
    <property type="project" value="UniProtKB-UniRule"/>
</dbReference>
<dbReference type="GO" id="GO:0016726">
    <property type="term" value="F:oxidoreductase activity, acting on CH or CH2 groups, NAD or NADP as acceptor"/>
    <property type="evidence" value="ECO:0007669"/>
    <property type="project" value="UniProtKB-UniRule"/>
</dbReference>
<dbReference type="GO" id="GO:0019877">
    <property type="term" value="P:diaminopimelate biosynthetic process"/>
    <property type="evidence" value="ECO:0007669"/>
    <property type="project" value="UniProtKB-UniRule"/>
</dbReference>
<dbReference type="GO" id="GO:0009089">
    <property type="term" value="P:lysine biosynthetic process via diaminopimelate"/>
    <property type="evidence" value="ECO:0007669"/>
    <property type="project" value="UniProtKB-UniRule"/>
</dbReference>
<dbReference type="CDD" id="cd02274">
    <property type="entry name" value="DHDPR_N"/>
    <property type="match status" value="1"/>
</dbReference>
<dbReference type="FunFam" id="3.30.360.10:FF:000004">
    <property type="entry name" value="4-hydroxy-tetrahydrodipicolinate reductase"/>
    <property type="match status" value="1"/>
</dbReference>
<dbReference type="Gene3D" id="3.30.360.10">
    <property type="entry name" value="Dihydrodipicolinate Reductase, domain 2"/>
    <property type="match status" value="1"/>
</dbReference>
<dbReference type="Gene3D" id="3.40.50.720">
    <property type="entry name" value="NAD(P)-binding Rossmann-like Domain"/>
    <property type="match status" value="1"/>
</dbReference>
<dbReference type="HAMAP" id="MF_00102">
    <property type="entry name" value="DapB"/>
    <property type="match status" value="1"/>
</dbReference>
<dbReference type="InterPro" id="IPR022663">
    <property type="entry name" value="DapB_C"/>
</dbReference>
<dbReference type="InterPro" id="IPR000846">
    <property type="entry name" value="DapB_N"/>
</dbReference>
<dbReference type="InterPro" id="IPR022664">
    <property type="entry name" value="DapB_N_CS"/>
</dbReference>
<dbReference type="InterPro" id="IPR023940">
    <property type="entry name" value="DHDPR_bac"/>
</dbReference>
<dbReference type="InterPro" id="IPR036291">
    <property type="entry name" value="NAD(P)-bd_dom_sf"/>
</dbReference>
<dbReference type="NCBIfam" id="TIGR00036">
    <property type="entry name" value="dapB"/>
    <property type="match status" value="1"/>
</dbReference>
<dbReference type="PANTHER" id="PTHR20836:SF0">
    <property type="entry name" value="4-HYDROXY-TETRAHYDRODIPICOLINATE REDUCTASE 1, CHLOROPLASTIC-RELATED"/>
    <property type="match status" value="1"/>
</dbReference>
<dbReference type="PANTHER" id="PTHR20836">
    <property type="entry name" value="DIHYDRODIPICOLINATE REDUCTASE"/>
    <property type="match status" value="1"/>
</dbReference>
<dbReference type="Pfam" id="PF05173">
    <property type="entry name" value="DapB_C"/>
    <property type="match status" value="1"/>
</dbReference>
<dbReference type="Pfam" id="PF01113">
    <property type="entry name" value="DapB_N"/>
    <property type="match status" value="1"/>
</dbReference>
<dbReference type="PIRSF" id="PIRSF000161">
    <property type="entry name" value="DHPR"/>
    <property type="match status" value="1"/>
</dbReference>
<dbReference type="SUPFAM" id="SSF55347">
    <property type="entry name" value="Glyceraldehyde-3-phosphate dehydrogenase-like, C-terminal domain"/>
    <property type="match status" value="1"/>
</dbReference>
<dbReference type="SUPFAM" id="SSF51735">
    <property type="entry name" value="NAD(P)-binding Rossmann-fold domains"/>
    <property type="match status" value="1"/>
</dbReference>
<dbReference type="PROSITE" id="PS01298">
    <property type="entry name" value="DAPB"/>
    <property type="match status" value="1"/>
</dbReference>
<gene>
    <name evidence="1" type="primary">dapB</name>
    <name type="ordered locus">Bind_0132</name>
</gene>
<protein>
    <recommendedName>
        <fullName evidence="1">4-hydroxy-tetrahydrodipicolinate reductase</fullName>
        <shortName evidence="1">HTPA reductase</shortName>
        <ecNumber evidence="1">1.17.1.8</ecNumber>
    </recommendedName>
</protein>
<keyword id="KW-0028">Amino-acid biosynthesis</keyword>
<keyword id="KW-0963">Cytoplasm</keyword>
<keyword id="KW-0220">Diaminopimelate biosynthesis</keyword>
<keyword id="KW-0457">Lysine biosynthesis</keyword>
<keyword id="KW-0520">NAD</keyword>
<keyword id="KW-0521">NADP</keyword>
<keyword id="KW-0560">Oxidoreductase</keyword>
<keyword id="KW-1185">Reference proteome</keyword>
<accession>B2IBR8</accession>
<sequence length="271" mass="27863">MSELKLVVAGAAGRMGRVLIQTAIETSGVTVSAALARPGSLALGQDAGLLAGCGEINVPITEDALAAIVDADGILDFTSPDLSVELAALAAQARIVHIIGTTGFSVAHLTKIEAAARHAVIVRSGNMSLGVNLLAALVKKTAAVLGPVYDIEIAEMHHRMKVDAPSGTALLLGEAAAQGRGISLSEHEQRGRDGHTGPRKDGDIGFVSLRGGTVVGDHTVIFAGPGERIELAHRAEDRRIFGRGAVQAALWGKGRKPGLYSMLDVLGLGGE</sequence>
<reference key="1">
    <citation type="journal article" date="2010" name="J. Bacteriol.">
        <title>Complete genome sequence of Beijerinckia indica subsp. indica.</title>
        <authorList>
            <person name="Tamas I."/>
            <person name="Dedysh S.N."/>
            <person name="Liesack W."/>
            <person name="Stott M.B."/>
            <person name="Alam M."/>
            <person name="Murrell J.C."/>
            <person name="Dunfield P.F."/>
        </authorList>
    </citation>
    <scope>NUCLEOTIDE SEQUENCE [LARGE SCALE GENOMIC DNA]</scope>
    <source>
        <strain>ATCC 9039 / DSM 1715 / NCIMB 8712</strain>
    </source>
</reference>
<comment type="function">
    <text evidence="1">Catalyzes the conversion of 4-hydroxy-tetrahydrodipicolinate (HTPA) to tetrahydrodipicolinate.</text>
</comment>
<comment type="catalytic activity">
    <reaction evidence="1">
        <text>(S)-2,3,4,5-tetrahydrodipicolinate + NAD(+) + H2O = (2S,4S)-4-hydroxy-2,3,4,5-tetrahydrodipicolinate + NADH + H(+)</text>
        <dbReference type="Rhea" id="RHEA:35323"/>
        <dbReference type="ChEBI" id="CHEBI:15377"/>
        <dbReference type="ChEBI" id="CHEBI:15378"/>
        <dbReference type="ChEBI" id="CHEBI:16845"/>
        <dbReference type="ChEBI" id="CHEBI:57540"/>
        <dbReference type="ChEBI" id="CHEBI:57945"/>
        <dbReference type="ChEBI" id="CHEBI:67139"/>
        <dbReference type="EC" id="1.17.1.8"/>
    </reaction>
</comment>
<comment type="catalytic activity">
    <reaction evidence="1">
        <text>(S)-2,3,4,5-tetrahydrodipicolinate + NADP(+) + H2O = (2S,4S)-4-hydroxy-2,3,4,5-tetrahydrodipicolinate + NADPH + H(+)</text>
        <dbReference type="Rhea" id="RHEA:35331"/>
        <dbReference type="ChEBI" id="CHEBI:15377"/>
        <dbReference type="ChEBI" id="CHEBI:15378"/>
        <dbReference type="ChEBI" id="CHEBI:16845"/>
        <dbReference type="ChEBI" id="CHEBI:57783"/>
        <dbReference type="ChEBI" id="CHEBI:58349"/>
        <dbReference type="ChEBI" id="CHEBI:67139"/>
        <dbReference type="EC" id="1.17.1.8"/>
    </reaction>
</comment>
<comment type="pathway">
    <text evidence="1">Amino-acid biosynthesis; L-lysine biosynthesis via DAP pathway; (S)-tetrahydrodipicolinate from L-aspartate: step 4/4.</text>
</comment>
<comment type="subcellular location">
    <subcellularLocation>
        <location evidence="1">Cytoplasm</location>
    </subcellularLocation>
</comment>
<comment type="similarity">
    <text evidence="1">Belongs to the DapB family.</text>
</comment>
<comment type="caution">
    <text evidence="3">Was originally thought to be a dihydrodipicolinate reductase (DHDPR), catalyzing the conversion of dihydrodipicolinate to tetrahydrodipicolinate. However, it was shown in E.coli that the substrate of the enzymatic reaction is not dihydrodipicolinate (DHDP) but in fact (2S,4S)-4-hydroxy-2,3,4,5-tetrahydrodipicolinic acid (HTPA), the product released by the DapA-catalyzed reaction.</text>
</comment>
<name>DAPB_BEII9</name>